<comment type="function">
    <text evidence="1">The UvrABC repair system catalyzes the recognition and processing of DNA lesions. UvrC both incises the 5' and 3' sides of the lesion. The N-terminal half is responsible for the 3' incision and the C-terminal half is responsible for the 5' incision.</text>
</comment>
<comment type="subunit">
    <text evidence="1">Interacts with UvrB in an incision complex.</text>
</comment>
<comment type="subcellular location">
    <subcellularLocation>
        <location evidence="1">Cytoplasm</location>
    </subcellularLocation>
</comment>
<comment type="similarity">
    <text evidence="1">Belongs to the UvrC family.</text>
</comment>
<dbReference type="EMBL" id="AL111168">
    <property type="protein sequence ID" value="CAL35361.1"/>
    <property type="molecule type" value="Genomic_DNA"/>
</dbReference>
<dbReference type="PIR" id="H81331">
    <property type="entry name" value="H81331"/>
</dbReference>
<dbReference type="RefSeq" id="WP_002864614.1">
    <property type="nucleotide sequence ID" value="NZ_SZUC01000001.1"/>
</dbReference>
<dbReference type="RefSeq" id="YP_002344637.1">
    <property type="nucleotide sequence ID" value="NC_002163.1"/>
</dbReference>
<dbReference type="SMR" id="Q9PN51"/>
<dbReference type="IntAct" id="Q9PN51">
    <property type="interactions" value="5"/>
</dbReference>
<dbReference type="STRING" id="192222.Cj1246c"/>
<dbReference type="PaxDb" id="192222-Cj1246c"/>
<dbReference type="EnsemblBacteria" id="CAL35361">
    <property type="protein sequence ID" value="CAL35361"/>
    <property type="gene ID" value="Cj1246c"/>
</dbReference>
<dbReference type="GeneID" id="905537"/>
<dbReference type="KEGG" id="cje:Cj1246c"/>
<dbReference type="PATRIC" id="fig|192222.6.peg.1228"/>
<dbReference type="eggNOG" id="COG0322">
    <property type="taxonomic scope" value="Bacteria"/>
</dbReference>
<dbReference type="HOGENOM" id="CLU_014841_3_2_7"/>
<dbReference type="OrthoDB" id="9804933at2"/>
<dbReference type="Proteomes" id="UP000000799">
    <property type="component" value="Chromosome"/>
</dbReference>
<dbReference type="GO" id="GO:0005737">
    <property type="term" value="C:cytoplasm"/>
    <property type="evidence" value="ECO:0007669"/>
    <property type="project" value="UniProtKB-SubCell"/>
</dbReference>
<dbReference type="GO" id="GO:0009380">
    <property type="term" value="C:excinuclease repair complex"/>
    <property type="evidence" value="ECO:0007669"/>
    <property type="project" value="InterPro"/>
</dbReference>
<dbReference type="GO" id="GO:0003677">
    <property type="term" value="F:DNA binding"/>
    <property type="evidence" value="ECO:0007669"/>
    <property type="project" value="UniProtKB-UniRule"/>
</dbReference>
<dbReference type="GO" id="GO:0009381">
    <property type="term" value="F:excinuclease ABC activity"/>
    <property type="evidence" value="ECO:0007669"/>
    <property type="project" value="UniProtKB-UniRule"/>
</dbReference>
<dbReference type="GO" id="GO:0006289">
    <property type="term" value="P:nucleotide-excision repair"/>
    <property type="evidence" value="ECO:0007669"/>
    <property type="project" value="UniProtKB-UniRule"/>
</dbReference>
<dbReference type="GO" id="GO:0009432">
    <property type="term" value="P:SOS response"/>
    <property type="evidence" value="ECO:0007669"/>
    <property type="project" value="UniProtKB-UniRule"/>
</dbReference>
<dbReference type="CDD" id="cd10434">
    <property type="entry name" value="GIY-YIG_UvrC_Cho"/>
    <property type="match status" value="1"/>
</dbReference>
<dbReference type="FunFam" id="3.40.1440.10:FF:000001">
    <property type="entry name" value="UvrABC system protein C"/>
    <property type="match status" value="1"/>
</dbReference>
<dbReference type="Gene3D" id="3.40.1440.10">
    <property type="entry name" value="GIY-YIG endonuclease"/>
    <property type="match status" value="1"/>
</dbReference>
<dbReference type="Gene3D" id="4.10.860.10">
    <property type="entry name" value="UVR domain"/>
    <property type="match status" value="1"/>
</dbReference>
<dbReference type="Gene3D" id="3.30.420.340">
    <property type="entry name" value="UvrC, RNAse H endonuclease domain"/>
    <property type="match status" value="1"/>
</dbReference>
<dbReference type="HAMAP" id="MF_00203">
    <property type="entry name" value="UvrC"/>
    <property type="match status" value="1"/>
</dbReference>
<dbReference type="InterPro" id="IPR000305">
    <property type="entry name" value="GIY-YIG_endonuc"/>
</dbReference>
<dbReference type="InterPro" id="IPR035901">
    <property type="entry name" value="GIY-YIG_endonuc_sf"/>
</dbReference>
<dbReference type="InterPro" id="IPR047296">
    <property type="entry name" value="GIY-YIG_UvrC_Cho"/>
</dbReference>
<dbReference type="InterPro" id="IPR010994">
    <property type="entry name" value="RuvA_2-like"/>
</dbReference>
<dbReference type="InterPro" id="IPR001943">
    <property type="entry name" value="UVR_dom"/>
</dbReference>
<dbReference type="InterPro" id="IPR036876">
    <property type="entry name" value="UVR_dom_sf"/>
</dbReference>
<dbReference type="InterPro" id="IPR050066">
    <property type="entry name" value="UvrABC_protein_C"/>
</dbReference>
<dbReference type="InterPro" id="IPR004791">
    <property type="entry name" value="UvrC"/>
</dbReference>
<dbReference type="InterPro" id="IPR001162">
    <property type="entry name" value="UvrC_RNase_H_dom"/>
</dbReference>
<dbReference type="InterPro" id="IPR038476">
    <property type="entry name" value="UvrC_RNase_H_dom_sf"/>
</dbReference>
<dbReference type="NCBIfam" id="TIGR00194">
    <property type="entry name" value="uvrC"/>
    <property type="match status" value="1"/>
</dbReference>
<dbReference type="PANTHER" id="PTHR30562:SF1">
    <property type="entry name" value="UVRABC SYSTEM PROTEIN C"/>
    <property type="match status" value="1"/>
</dbReference>
<dbReference type="PANTHER" id="PTHR30562">
    <property type="entry name" value="UVRC/OXIDOREDUCTASE"/>
    <property type="match status" value="1"/>
</dbReference>
<dbReference type="Pfam" id="PF01541">
    <property type="entry name" value="GIY-YIG"/>
    <property type="match status" value="1"/>
</dbReference>
<dbReference type="Pfam" id="PF02151">
    <property type="entry name" value="UVR"/>
    <property type="match status" value="1"/>
</dbReference>
<dbReference type="Pfam" id="PF22920">
    <property type="entry name" value="UvrC_RNaseH"/>
    <property type="match status" value="1"/>
</dbReference>
<dbReference type="Pfam" id="PF08459">
    <property type="entry name" value="UvrC_RNaseH_dom"/>
    <property type="match status" value="1"/>
</dbReference>
<dbReference type="SMART" id="SM00465">
    <property type="entry name" value="GIYc"/>
    <property type="match status" value="1"/>
</dbReference>
<dbReference type="SUPFAM" id="SSF46600">
    <property type="entry name" value="C-terminal UvrC-binding domain of UvrB"/>
    <property type="match status" value="1"/>
</dbReference>
<dbReference type="SUPFAM" id="SSF82771">
    <property type="entry name" value="GIY-YIG endonuclease"/>
    <property type="match status" value="1"/>
</dbReference>
<dbReference type="SUPFAM" id="SSF47781">
    <property type="entry name" value="RuvA domain 2-like"/>
    <property type="match status" value="1"/>
</dbReference>
<dbReference type="PROSITE" id="PS50164">
    <property type="entry name" value="GIY_YIG"/>
    <property type="match status" value="1"/>
</dbReference>
<dbReference type="PROSITE" id="PS50151">
    <property type="entry name" value="UVR"/>
    <property type="match status" value="1"/>
</dbReference>
<dbReference type="PROSITE" id="PS50165">
    <property type="entry name" value="UVRC"/>
    <property type="match status" value="1"/>
</dbReference>
<gene>
    <name evidence="1" type="primary">uvrC</name>
    <name type="ordered locus">Cj1246c</name>
</gene>
<keyword id="KW-0963">Cytoplasm</keyword>
<keyword id="KW-0227">DNA damage</keyword>
<keyword id="KW-0228">DNA excision</keyword>
<keyword id="KW-0234">DNA repair</keyword>
<keyword id="KW-0267">Excision nuclease</keyword>
<keyword id="KW-1185">Reference proteome</keyword>
<keyword id="KW-0742">SOS response</keyword>
<name>UVRC_CAMJE</name>
<accession>Q9PN51</accession>
<accession>Q0P910</accession>
<organism>
    <name type="scientific">Campylobacter jejuni subsp. jejuni serotype O:2 (strain ATCC 700819 / NCTC 11168)</name>
    <dbReference type="NCBI Taxonomy" id="192222"/>
    <lineage>
        <taxon>Bacteria</taxon>
        <taxon>Pseudomonadati</taxon>
        <taxon>Campylobacterota</taxon>
        <taxon>Epsilonproteobacteria</taxon>
        <taxon>Campylobacterales</taxon>
        <taxon>Campylobacteraceae</taxon>
        <taxon>Campylobacter</taxon>
    </lineage>
</organism>
<sequence length="600" mass="69694">MTKENLENELKTLPNSTGVYQYFNQEGKLLYVGKAKNLKNRVRSYFAFTPNLHANPRNSLRIQKMIEETVHLEFIATNSEADALILENSFIKQLHPKYNILLRDDKTYPYIYVDFEEEFPRFEITRKLVKKSKIKYFGPFFKGARELLDALYLYYPLKQKASCKSPCIFYQISRCLAPCDKLISREKYLEILDEAIHALLNPSVLLKNLEKQMLVLAQNENYEEAAKVRDQIAMIKDLEVKVEIDIAKLEDFEVFALAFKNSVLSTLRFVVQNGKIISANSKITPIKNDIQWDQNEIYKQLILENFSMDIPLLANVIYVYEEFEDRVLLEEILSQRFDKKISIKIPKIGEKRRICDLAFQNALLNIEKEQKNHDFTIQKELKSYFELENLPNDIEIFDNSHLQGVANVGAMVTYRINSWDKSKYRKFHLKHKNDYDQMREVLTRRALDFDKIPPPDLWLIDGGKALLDLAKEIIVSSGVNVDILAISKEKIDAKAHRAKGGAKDKIHSLKGEFSLSINDKKLQFLQKLRDEAHRFAISFHQNTKKKQDLKSSKLANLGLSSGVMQKLLAYYGNFESIYKADFKDLTMLVGRKAAQKIKEN</sequence>
<reference key="1">
    <citation type="journal article" date="2000" name="Nature">
        <title>The genome sequence of the food-borne pathogen Campylobacter jejuni reveals hypervariable sequences.</title>
        <authorList>
            <person name="Parkhill J."/>
            <person name="Wren B.W."/>
            <person name="Mungall K.L."/>
            <person name="Ketley J.M."/>
            <person name="Churcher C.M."/>
            <person name="Basham D."/>
            <person name="Chillingworth T."/>
            <person name="Davies R.M."/>
            <person name="Feltwell T."/>
            <person name="Holroyd S."/>
            <person name="Jagels K."/>
            <person name="Karlyshev A.V."/>
            <person name="Moule S."/>
            <person name="Pallen M.J."/>
            <person name="Penn C.W."/>
            <person name="Quail M.A."/>
            <person name="Rajandream M.A."/>
            <person name="Rutherford K.M."/>
            <person name="van Vliet A.H.M."/>
            <person name="Whitehead S."/>
            <person name="Barrell B.G."/>
        </authorList>
    </citation>
    <scope>NUCLEOTIDE SEQUENCE [LARGE SCALE GENOMIC DNA]</scope>
    <source>
        <strain>ATCC 700819 / NCTC 11168</strain>
    </source>
</reference>
<proteinExistence type="inferred from homology"/>
<evidence type="ECO:0000255" key="1">
    <source>
        <dbReference type="HAMAP-Rule" id="MF_00203"/>
    </source>
</evidence>
<protein>
    <recommendedName>
        <fullName evidence="1">UvrABC system protein C</fullName>
        <shortName evidence="1">Protein UvrC</shortName>
    </recommendedName>
    <alternativeName>
        <fullName evidence="1">Excinuclease ABC subunit C</fullName>
    </alternativeName>
</protein>
<feature type="chain" id="PRO_0000227408" description="UvrABC system protein C">
    <location>
        <begin position="1"/>
        <end position="600"/>
    </location>
</feature>
<feature type="domain" description="GIY-YIG" evidence="1">
    <location>
        <begin position="15"/>
        <end position="100"/>
    </location>
</feature>
<feature type="domain" description="UVR" evidence="1">
    <location>
        <begin position="203"/>
        <end position="238"/>
    </location>
</feature>